<organism>
    <name type="scientific">Blochmanniella floridana</name>
    <dbReference type="NCBI Taxonomy" id="203907"/>
    <lineage>
        <taxon>Bacteria</taxon>
        <taxon>Pseudomonadati</taxon>
        <taxon>Pseudomonadota</taxon>
        <taxon>Gammaproteobacteria</taxon>
        <taxon>Enterobacterales</taxon>
        <taxon>Enterobacteriaceae</taxon>
        <taxon>ant endosymbionts</taxon>
        <taxon>Candidatus Blochmanniella</taxon>
    </lineage>
</organism>
<proteinExistence type="inferred from homology"/>
<keyword id="KW-0143">Chaperone</keyword>
<keyword id="KW-0963">Cytoplasm</keyword>
<keyword id="KW-0235">DNA replication</keyword>
<keyword id="KW-0479">Metal-binding</keyword>
<keyword id="KW-1185">Reference proteome</keyword>
<keyword id="KW-0677">Repeat</keyword>
<keyword id="KW-0346">Stress response</keyword>
<keyword id="KW-0862">Zinc</keyword>
<keyword id="KW-0863">Zinc-finger</keyword>
<feature type="chain" id="PRO_0000070753" description="Chaperone protein DnaJ">
    <location>
        <begin position="1"/>
        <end position="377"/>
    </location>
</feature>
<feature type="domain" description="J" evidence="1">
    <location>
        <begin position="5"/>
        <end position="70"/>
    </location>
</feature>
<feature type="repeat" description="CXXCXGXG motif">
    <location>
        <begin position="144"/>
        <end position="151"/>
    </location>
</feature>
<feature type="repeat" description="CXXCXGXG motif">
    <location>
        <begin position="161"/>
        <end position="168"/>
    </location>
</feature>
<feature type="repeat" description="CXXCXGXG motif">
    <location>
        <begin position="183"/>
        <end position="190"/>
    </location>
</feature>
<feature type="repeat" description="CXXCXGXG motif">
    <location>
        <begin position="197"/>
        <end position="204"/>
    </location>
</feature>
<feature type="zinc finger region" description="CR-type" evidence="1">
    <location>
        <begin position="131"/>
        <end position="209"/>
    </location>
</feature>
<feature type="binding site" evidence="1">
    <location>
        <position position="144"/>
    </location>
    <ligand>
        <name>Zn(2+)</name>
        <dbReference type="ChEBI" id="CHEBI:29105"/>
        <label>1</label>
    </ligand>
</feature>
<feature type="binding site" evidence="1">
    <location>
        <position position="147"/>
    </location>
    <ligand>
        <name>Zn(2+)</name>
        <dbReference type="ChEBI" id="CHEBI:29105"/>
        <label>1</label>
    </ligand>
</feature>
<feature type="binding site" evidence="1">
    <location>
        <position position="161"/>
    </location>
    <ligand>
        <name>Zn(2+)</name>
        <dbReference type="ChEBI" id="CHEBI:29105"/>
        <label>2</label>
    </ligand>
</feature>
<feature type="binding site" evidence="1">
    <location>
        <position position="164"/>
    </location>
    <ligand>
        <name>Zn(2+)</name>
        <dbReference type="ChEBI" id="CHEBI:29105"/>
        <label>2</label>
    </ligand>
</feature>
<feature type="binding site" evidence="1">
    <location>
        <position position="183"/>
    </location>
    <ligand>
        <name>Zn(2+)</name>
        <dbReference type="ChEBI" id="CHEBI:29105"/>
        <label>2</label>
    </ligand>
</feature>
<feature type="binding site" evidence="1">
    <location>
        <position position="186"/>
    </location>
    <ligand>
        <name>Zn(2+)</name>
        <dbReference type="ChEBI" id="CHEBI:29105"/>
        <label>2</label>
    </ligand>
</feature>
<feature type="binding site" evidence="1">
    <location>
        <position position="197"/>
    </location>
    <ligand>
        <name>Zn(2+)</name>
        <dbReference type="ChEBI" id="CHEBI:29105"/>
        <label>1</label>
    </ligand>
</feature>
<feature type="binding site" evidence="1">
    <location>
        <position position="200"/>
    </location>
    <ligand>
        <name>Zn(2+)</name>
        <dbReference type="ChEBI" id="CHEBI:29105"/>
        <label>1</label>
    </ligand>
</feature>
<sequence length="377" mass="41379">MVKSDYYEILGVSKNADEREIKKSYKRLAMKFHPDRNPGDVSAESKFKEIKEAYEVLSNPEKRSAYDQYGHAIFEQNSGGMGGSNTGGSDFSDIFGDVFGDIFGGSRRSRSRRGSDLRYDIELSLEEAVKGVVREICVPTLVTCLQCRGSGAKSSASIVSCVTCHGHGQIQMRQGFFSVQQSCPSCNGHGKIIKEICNKCRGSGRIERTKTLSVKIPAGVSTGDRIRLSGEGESGKNGAPAGDLYVQVQIKKHPIFDREEKNLYCEVPISFSMAALGGEIEVPTLDGRVKLKIPPETQTGKLFRMRGKGVKSVRGIGGHGDLLCRVVVETPVRLSDRQKQLLQDLSDSFGGPYGHKNSPKSKTFFDGVKKFFDDLTR</sequence>
<comment type="function">
    <text evidence="1">Participates actively in the response to hyperosmotic and heat shock by preventing the aggregation of stress-denatured proteins and by disaggregating proteins, also in an autonomous, DnaK-independent fashion. Unfolded proteins bind initially to DnaJ; upon interaction with the DnaJ-bound protein, DnaK hydrolyzes its bound ATP, resulting in the formation of a stable complex. GrpE releases ADP from DnaK; ATP binding to DnaK triggers the release of the substrate protein, thus completing the reaction cycle. Several rounds of ATP-dependent interactions between DnaJ, DnaK and GrpE are required for fully efficient folding. Also involved, together with DnaK and GrpE, in the DNA replication of plasmids through activation of initiation proteins.</text>
</comment>
<comment type="cofactor">
    <cofactor evidence="1">
        <name>Zn(2+)</name>
        <dbReference type="ChEBI" id="CHEBI:29105"/>
    </cofactor>
    <text evidence="1">Binds 2 Zn(2+) ions per monomer.</text>
</comment>
<comment type="subunit">
    <text evidence="1">Homodimer.</text>
</comment>
<comment type="subcellular location">
    <subcellularLocation>
        <location evidence="1">Cytoplasm</location>
    </subcellularLocation>
</comment>
<comment type="domain">
    <text evidence="1">The J domain is necessary and sufficient to stimulate DnaK ATPase activity. Zinc center 1 plays an important role in the autonomous, DnaK-independent chaperone activity of DnaJ. Zinc center 2 is essential for interaction with DnaK and for DnaJ activity.</text>
</comment>
<comment type="similarity">
    <text evidence="1">Belongs to the DnaJ family.</text>
</comment>
<gene>
    <name evidence="1" type="primary">dnaJ</name>
    <name type="ordered locus">Bfl115</name>
</gene>
<name>DNAJ_BLOFL</name>
<dbReference type="EMBL" id="BX248583">
    <property type="protein sequence ID" value="CAD83636.1"/>
    <property type="molecule type" value="Genomic_DNA"/>
</dbReference>
<dbReference type="SMR" id="Q7VQL3"/>
<dbReference type="STRING" id="203907.Bfl115"/>
<dbReference type="KEGG" id="bfl:Bfl115"/>
<dbReference type="eggNOG" id="COG0484">
    <property type="taxonomic scope" value="Bacteria"/>
</dbReference>
<dbReference type="HOGENOM" id="CLU_017633_0_7_6"/>
<dbReference type="OrthoDB" id="9779889at2"/>
<dbReference type="Proteomes" id="UP000002192">
    <property type="component" value="Chromosome"/>
</dbReference>
<dbReference type="GO" id="GO:0005737">
    <property type="term" value="C:cytoplasm"/>
    <property type="evidence" value="ECO:0007669"/>
    <property type="project" value="UniProtKB-SubCell"/>
</dbReference>
<dbReference type="GO" id="GO:0005524">
    <property type="term" value="F:ATP binding"/>
    <property type="evidence" value="ECO:0007669"/>
    <property type="project" value="InterPro"/>
</dbReference>
<dbReference type="GO" id="GO:0031072">
    <property type="term" value="F:heat shock protein binding"/>
    <property type="evidence" value="ECO:0007669"/>
    <property type="project" value="InterPro"/>
</dbReference>
<dbReference type="GO" id="GO:0051082">
    <property type="term" value="F:unfolded protein binding"/>
    <property type="evidence" value="ECO:0007669"/>
    <property type="project" value="UniProtKB-UniRule"/>
</dbReference>
<dbReference type="GO" id="GO:0008270">
    <property type="term" value="F:zinc ion binding"/>
    <property type="evidence" value="ECO:0007669"/>
    <property type="project" value="UniProtKB-UniRule"/>
</dbReference>
<dbReference type="GO" id="GO:0051085">
    <property type="term" value="P:chaperone cofactor-dependent protein refolding"/>
    <property type="evidence" value="ECO:0007669"/>
    <property type="project" value="TreeGrafter"/>
</dbReference>
<dbReference type="GO" id="GO:0006260">
    <property type="term" value="P:DNA replication"/>
    <property type="evidence" value="ECO:0007669"/>
    <property type="project" value="UniProtKB-KW"/>
</dbReference>
<dbReference type="GO" id="GO:0042026">
    <property type="term" value="P:protein refolding"/>
    <property type="evidence" value="ECO:0007669"/>
    <property type="project" value="TreeGrafter"/>
</dbReference>
<dbReference type="GO" id="GO:0009408">
    <property type="term" value="P:response to heat"/>
    <property type="evidence" value="ECO:0007669"/>
    <property type="project" value="InterPro"/>
</dbReference>
<dbReference type="CDD" id="cd06257">
    <property type="entry name" value="DnaJ"/>
    <property type="match status" value="1"/>
</dbReference>
<dbReference type="CDD" id="cd10747">
    <property type="entry name" value="DnaJ_C"/>
    <property type="match status" value="1"/>
</dbReference>
<dbReference type="CDD" id="cd10719">
    <property type="entry name" value="DnaJ_zf"/>
    <property type="match status" value="1"/>
</dbReference>
<dbReference type="FunFam" id="1.10.287.110:FF:000034">
    <property type="entry name" value="Chaperone protein DnaJ"/>
    <property type="match status" value="1"/>
</dbReference>
<dbReference type="FunFam" id="2.10.230.10:FF:000002">
    <property type="entry name" value="Molecular chaperone DnaJ"/>
    <property type="match status" value="1"/>
</dbReference>
<dbReference type="FunFam" id="2.60.260.20:FF:000004">
    <property type="entry name" value="Molecular chaperone DnaJ"/>
    <property type="match status" value="1"/>
</dbReference>
<dbReference type="Gene3D" id="1.10.287.110">
    <property type="entry name" value="DnaJ domain"/>
    <property type="match status" value="1"/>
</dbReference>
<dbReference type="Gene3D" id="2.10.230.10">
    <property type="entry name" value="Heat shock protein DnaJ, cysteine-rich domain"/>
    <property type="match status" value="1"/>
</dbReference>
<dbReference type="Gene3D" id="2.60.260.20">
    <property type="entry name" value="Urease metallochaperone UreE, N-terminal domain"/>
    <property type="match status" value="2"/>
</dbReference>
<dbReference type="HAMAP" id="MF_01152">
    <property type="entry name" value="DnaJ"/>
    <property type="match status" value="1"/>
</dbReference>
<dbReference type="InterPro" id="IPR012724">
    <property type="entry name" value="DnaJ"/>
</dbReference>
<dbReference type="InterPro" id="IPR002939">
    <property type="entry name" value="DnaJ_C"/>
</dbReference>
<dbReference type="InterPro" id="IPR001623">
    <property type="entry name" value="DnaJ_domain"/>
</dbReference>
<dbReference type="InterPro" id="IPR018253">
    <property type="entry name" value="DnaJ_domain_CS"/>
</dbReference>
<dbReference type="InterPro" id="IPR008971">
    <property type="entry name" value="HSP40/DnaJ_pept-bd"/>
</dbReference>
<dbReference type="InterPro" id="IPR001305">
    <property type="entry name" value="HSP_DnaJ_Cys-rich_dom"/>
</dbReference>
<dbReference type="InterPro" id="IPR036410">
    <property type="entry name" value="HSP_DnaJ_Cys-rich_dom_sf"/>
</dbReference>
<dbReference type="InterPro" id="IPR036869">
    <property type="entry name" value="J_dom_sf"/>
</dbReference>
<dbReference type="NCBIfam" id="TIGR02349">
    <property type="entry name" value="DnaJ_bact"/>
    <property type="match status" value="1"/>
</dbReference>
<dbReference type="NCBIfam" id="NF008035">
    <property type="entry name" value="PRK10767.1"/>
    <property type="match status" value="1"/>
</dbReference>
<dbReference type="PANTHER" id="PTHR43096:SF48">
    <property type="entry name" value="CHAPERONE PROTEIN DNAJ"/>
    <property type="match status" value="1"/>
</dbReference>
<dbReference type="PANTHER" id="PTHR43096">
    <property type="entry name" value="DNAJ HOMOLOG 1, MITOCHONDRIAL-RELATED"/>
    <property type="match status" value="1"/>
</dbReference>
<dbReference type="Pfam" id="PF00226">
    <property type="entry name" value="DnaJ"/>
    <property type="match status" value="1"/>
</dbReference>
<dbReference type="Pfam" id="PF01556">
    <property type="entry name" value="DnaJ_C"/>
    <property type="match status" value="1"/>
</dbReference>
<dbReference type="Pfam" id="PF00684">
    <property type="entry name" value="DnaJ_CXXCXGXG"/>
    <property type="match status" value="1"/>
</dbReference>
<dbReference type="PRINTS" id="PR00625">
    <property type="entry name" value="JDOMAIN"/>
</dbReference>
<dbReference type="SMART" id="SM00271">
    <property type="entry name" value="DnaJ"/>
    <property type="match status" value="1"/>
</dbReference>
<dbReference type="SUPFAM" id="SSF46565">
    <property type="entry name" value="Chaperone J-domain"/>
    <property type="match status" value="1"/>
</dbReference>
<dbReference type="SUPFAM" id="SSF57938">
    <property type="entry name" value="DnaJ/Hsp40 cysteine-rich domain"/>
    <property type="match status" value="1"/>
</dbReference>
<dbReference type="SUPFAM" id="SSF49493">
    <property type="entry name" value="HSP40/DnaJ peptide-binding domain"/>
    <property type="match status" value="2"/>
</dbReference>
<dbReference type="PROSITE" id="PS00636">
    <property type="entry name" value="DNAJ_1"/>
    <property type="match status" value="1"/>
</dbReference>
<dbReference type="PROSITE" id="PS50076">
    <property type="entry name" value="DNAJ_2"/>
    <property type="match status" value="1"/>
</dbReference>
<dbReference type="PROSITE" id="PS51188">
    <property type="entry name" value="ZF_CR"/>
    <property type="match status" value="1"/>
</dbReference>
<accession>Q7VQL3</accession>
<evidence type="ECO:0000255" key="1">
    <source>
        <dbReference type="HAMAP-Rule" id="MF_01152"/>
    </source>
</evidence>
<protein>
    <recommendedName>
        <fullName evidence="1">Chaperone protein DnaJ</fullName>
    </recommendedName>
</protein>
<reference key="1">
    <citation type="journal article" date="2003" name="Proc. Natl. Acad. Sci. U.S.A.">
        <title>The genome sequence of Blochmannia floridanus: comparative analysis of reduced genomes.</title>
        <authorList>
            <person name="Gil R."/>
            <person name="Silva F.J."/>
            <person name="Zientz E."/>
            <person name="Delmotte F."/>
            <person name="Gonzalez-Candelas F."/>
            <person name="Latorre A."/>
            <person name="Rausell C."/>
            <person name="Kamerbeek J."/>
            <person name="Gadau J."/>
            <person name="Hoelldobler B."/>
            <person name="van Ham R.C.H.J."/>
            <person name="Gross R."/>
            <person name="Moya A."/>
        </authorList>
    </citation>
    <scope>NUCLEOTIDE SEQUENCE [LARGE SCALE GENOMIC DNA]</scope>
</reference>